<comment type="function">
    <text evidence="3">Adapter protein able to interact with different proteins and involved in different biological processes. Mediates the interaction between the error-prone DNA polymerase zeta catalytic subunit rev3l and the inserter polymerase rev1, thereby mediating the second polymerase switching in translesion DNA synthesis. Translesion DNA synthesis releases the replication blockade of replicative polymerases, stalled in presence of DNA lesions. May also play a role in signal transduction in response to DNA damage. May regulate the activation of the anaphase promoting complex APC thereby regulating progression through the cell cycle. Through transcriptional regulation may play a role in epithelial-mesenchymal transdifferentiation.</text>
</comment>
<comment type="function">
    <text evidence="3">Inhibits the fzr1-APC complex activity during mitosis. Plays a role in progression of mitosis.</text>
</comment>
<comment type="subunit">
    <text evidence="1">Homooligomer. Interacts with rev1 (By similarity). Interacts with rev3l (By similarity). Interacts with fzr1 (in complex with the anaphase promoting complex APC). May interact with cdc20 (By similarity).</text>
</comment>
<comment type="subcellular location">
    <subcellularLocation>
        <location evidence="3">Nucleus</location>
    </subcellularLocation>
    <subcellularLocation>
        <location evidence="1">Cytoplasm</location>
        <location evidence="1">Cytoskeleton</location>
        <location evidence="1">Spindle</location>
    </subcellularLocation>
    <subcellularLocation>
        <location evidence="1">Cytoplasm</location>
    </subcellularLocation>
</comment>
<comment type="developmental stage">
    <text evidence="3">Maternally and zigotically expressed. Uniformely distributed in embryos.</text>
</comment>
<sequence>MTTLTRQDLNFGQVVADILCEFLEVAVHLILYVREVYPTGIFQKRKKYNVPVQMSCHPELNRYIQDTLHCVKPLIEKNDVEKVVVVILDKEHHPVERFVFEIAQPPLLSISSDSLLSHVEQLLRAFILKISVCDAVLDNNPPGCTFTLLVHTREAATRNMEKIQVIKDFPWILADEQDVHMQEPRLIPLKTMTSDILKMQLYVEERAQKST</sequence>
<dbReference type="EMBL" id="AJ318530">
    <property type="protein sequence ID" value="CAC86900.1"/>
    <property type="molecule type" value="mRNA"/>
</dbReference>
<dbReference type="EMBL" id="BC084331">
    <property type="protein sequence ID" value="AAH84331.1"/>
    <property type="molecule type" value="mRNA"/>
</dbReference>
<dbReference type="RefSeq" id="NP_001081096.1">
    <property type="nucleotide sequence ID" value="NM_001087627.1"/>
</dbReference>
<dbReference type="SMR" id="Q8QFR4"/>
<dbReference type="BioGRID" id="98982">
    <property type="interactions" value="1"/>
</dbReference>
<dbReference type="DNASU" id="394380"/>
<dbReference type="GeneID" id="394380"/>
<dbReference type="KEGG" id="xla:394380"/>
<dbReference type="AGR" id="Xenbase:XB-GENE-6254429"/>
<dbReference type="CTD" id="394380"/>
<dbReference type="Xenbase" id="XB-GENE-6254429">
    <property type="gene designation" value="mad2l2.S"/>
</dbReference>
<dbReference type="OMA" id="CEDFPWI"/>
<dbReference type="OrthoDB" id="21254at2759"/>
<dbReference type="Proteomes" id="UP000186698">
    <property type="component" value="Chromosome 7S"/>
</dbReference>
<dbReference type="Bgee" id="394380">
    <property type="expression patterns" value="Expressed in egg cell and 19 other cell types or tissues"/>
</dbReference>
<dbReference type="GO" id="GO:0005737">
    <property type="term" value="C:cytoplasm"/>
    <property type="evidence" value="ECO:0007669"/>
    <property type="project" value="UniProtKB-SubCell"/>
</dbReference>
<dbReference type="GO" id="GO:0005634">
    <property type="term" value="C:nucleus"/>
    <property type="evidence" value="ECO:0000314"/>
    <property type="project" value="UniProtKB"/>
</dbReference>
<dbReference type="GO" id="GO:0005819">
    <property type="term" value="C:spindle"/>
    <property type="evidence" value="ECO:0000250"/>
    <property type="project" value="UniProtKB"/>
</dbReference>
<dbReference type="GO" id="GO:0016035">
    <property type="term" value="C:zeta DNA polymerase complex"/>
    <property type="evidence" value="ECO:0000250"/>
    <property type="project" value="UniProtKB"/>
</dbReference>
<dbReference type="GO" id="GO:0042802">
    <property type="term" value="F:identical protein binding"/>
    <property type="evidence" value="ECO:0000314"/>
    <property type="project" value="UniProtKB"/>
</dbReference>
<dbReference type="GO" id="GO:0031145">
    <property type="term" value="P:anaphase-promoting complex-dependent catabolic process"/>
    <property type="evidence" value="ECO:0000303"/>
    <property type="project" value="UniProtKB"/>
</dbReference>
<dbReference type="GO" id="GO:0051301">
    <property type="term" value="P:cell division"/>
    <property type="evidence" value="ECO:0007669"/>
    <property type="project" value="UniProtKB-KW"/>
</dbReference>
<dbReference type="GO" id="GO:0042772">
    <property type="term" value="P:DNA damage response, signal transduction resulting in transcription"/>
    <property type="evidence" value="ECO:0000250"/>
    <property type="project" value="UniProtKB"/>
</dbReference>
<dbReference type="GO" id="GO:0042177">
    <property type="term" value="P:negative regulation of protein catabolic process"/>
    <property type="evidence" value="ECO:0000314"/>
    <property type="project" value="UniProtKB"/>
</dbReference>
<dbReference type="GO" id="GO:0031397">
    <property type="term" value="P:negative regulation of protein ubiquitination"/>
    <property type="evidence" value="ECO:0000314"/>
    <property type="project" value="UniProtKB"/>
</dbReference>
<dbReference type="GO" id="GO:1904667">
    <property type="term" value="P:negative regulation of ubiquitin protein ligase activity"/>
    <property type="evidence" value="ECO:0000250"/>
    <property type="project" value="UniProtKB"/>
</dbReference>
<dbReference type="GO" id="GO:0045893">
    <property type="term" value="P:positive regulation of DNA-templated transcription"/>
    <property type="evidence" value="ECO:0000250"/>
    <property type="project" value="UniProtKB"/>
</dbReference>
<dbReference type="GO" id="GO:0033138">
    <property type="term" value="P:positive regulation of peptidyl-serine phosphorylation"/>
    <property type="evidence" value="ECO:0000250"/>
    <property type="project" value="UniProtKB"/>
</dbReference>
<dbReference type="GO" id="GO:0009794">
    <property type="term" value="P:regulation of mitotic cell cycle, embryonic"/>
    <property type="evidence" value="ECO:0000315"/>
    <property type="project" value="UniProtKB"/>
</dbReference>
<dbReference type="GO" id="GO:0043393">
    <property type="term" value="P:regulation of protein binding"/>
    <property type="evidence" value="ECO:0000314"/>
    <property type="project" value="UniProtKB"/>
</dbReference>
<dbReference type="FunFam" id="3.30.900.10:FF:000003">
    <property type="entry name" value="Mitotic spindle assembly checkpoint protein MAD2B"/>
    <property type="match status" value="1"/>
</dbReference>
<dbReference type="Gene3D" id="3.30.900.10">
    <property type="entry name" value="HORMA domain"/>
    <property type="match status" value="1"/>
</dbReference>
<dbReference type="InterPro" id="IPR003511">
    <property type="entry name" value="HORMA_dom"/>
</dbReference>
<dbReference type="InterPro" id="IPR036570">
    <property type="entry name" value="HORMA_dom_sf"/>
</dbReference>
<dbReference type="InterPro" id="IPR045091">
    <property type="entry name" value="Mad2-like"/>
</dbReference>
<dbReference type="PANTHER" id="PTHR11842">
    <property type="entry name" value="MITOTIC SPINDLE ASSEMBLY CHECKPOINT PROTEIN MAD2"/>
    <property type="match status" value="1"/>
</dbReference>
<dbReference type="PANTHER" id="PTHR11842:SF10">
    <property type="entry name" value="MITOTIC SPINDLE ASSEMBLY CHECKPOINT PROTEIN MAD2B"/>
    <property type="match status" value="1"/>
</dbReference>
<dbReference type="Pfam" id="PF02301">
    <property type="entry name" value="HORMA"/>
    <property type="match status" value="1"/>
</dbReference>
<dbReference type="SUPFAM" id="SSF56019">
    <property type="entry name" value="The spindle assembly checkpoint protein mad2"/>
    <property type="match status" value="1"/>
</dbReference>
<dbReference type="PROSITE" id="PS50815">
    <property type="entry name" value="HORMA"/>
    <property type="match status" value="1"/>
</dbReference>
<feature type="chain" id="PRO_0000405247" description="Mitotic spindle assembly checkpoint protein MAD2B">
    <location>
        <begin position="1"/>
        <end position="211"/>
    </location>
</feature>
<feature type="domain" description="HORMA" evidence="2">
    <location>
        <begin position="13"/>
        <end position="203"/>
    </location>
</feature>
<gene>
    <name type="primary">mad2l2</name>
    <name type="synonym">mad2B</name>
    <name type="synonym">mad2l2-a</name>
</gene>
<proteinExistence type="evidence at protein level"/>
<keyword id="KW-0131">Cell cycle</keyword>
<keyword id="KW-0132">Cell division</keyword>
<keyword id="KW-0963">Cytoplasm</keyword>
<keyword id="KW-0206">Cytoskeleton</keyword>
<keyword id="KW-0227">DNA damage</keyword>
<keyword id="KW-0498">Mitosis</keyword>
<keyword id="KW-0539">Nucleus</keyword>
<keyword id="KW-1185">Reference proteome</keyword>
<keyword id="KW-0804">Transcription</keyword>
<keyword id="KW-0805">Transcription regulation</keyword>
<organism>
    <name type="scientific">Xenopus laevis</name>
    <name type="common">African clawed frog</name>
    <dbReference type="NCBI Taxonomy" id="8355"/>
    <lineage>
        <taxon>Eukaryota</taxon>
        <taxon>Metazoa</taxon>
        <taxon>Chordata</taxon>
        <taxon>Craniata</taxon>
        <taxon>Vertebrata</taxon>
        <taxon>Euteleostomi</taxon>
        <taxon>Amphibia</taxon>
        <taxon>Batrachia</taxon>
        <taxon>Anura</taxon>
        <taxon>Pipoidea</taxon>
        <taxon>Pipidae</taxon>
        <taxon>Xenopodinae</taxon>
        <taxon>Xenopus</taxon>
        <taxon>Xenopus</taxon>
    </lineage>
</organism>
<reference key="1">
    <citation type="journal article" date="2004" name="Cytogenet. Genome Res.">
        <title>Isolation and characterization of the Xenopus laevis orthologs of the human papillary renal cell carcinoma-associated genes PRCC and MAD2L2 (MAD2B).</title>
        <authorList>
            <person name="van den Hurk W.H."/>
            <person name="Martens G.J."/>
            <person name="Geurts van Kessel A."/>
            <person name="van Groningen J.J."/>
        </authorList>
    </citation>
    <scope>NUCLEOTIDE SEQUENCE [MRNA]</scope>
</reference>
<reference key="2">
    <citation type="submission" date="2004-10" db="EMBL/GenBank/DDBJ databases">
        <authorList>
            <consortium name="NIH - Xenopus Gene Collection (XGC) project"/>
        </authorList>
    </citation>
    <scope>NUCLEOTIDE SEQUENCE [LARGE SCALE MRNA]</scope>
    <source>
        <tissue>Eye</tissue>
    </source>
</reference>
<reference key="3">
    <citation type="journal article" date="2001" name="Genes Dev.">
        <title>Inhibition of Cdh1-APC by the MAD2-related protein MAD2L2: a novel mechanism for regulating Cdh1.</title>
        <authorList>
            <person name="Pfleger C.M."/>
            <person name="Salic A."/>
            <person name="Lee E."/>
            <person name="Kirschner M.W."/>
        </authorList>
    </citation>
    <scope>FUNCTION</scope>
    <scope>INTERACTION WITH FZR1</scope>
    <scope>HOMOOLIGOMERIZATION</scope>
    <scope>SUBCELLULAR LOCATION</scope>
    <scope>DEVELOPMENTAL STAGE</scope>
</reference>
<accession>Q8QFR4</accession>
<protein>
    <recommendedName>
        <fullName>Mitotic spindle assembly checkpoint protein MAD2B</fullName>
    </recommendedName>
    <alternativeName>
        <fullName>Mad2l2-A protein</fullName>
    </alternativeName>
    <alternativeName>
        <fullName>Mitotic arrest defective protein 2B</fullName>
    </alternativeName>
    <alternativeName>
        <fullName>Mitotic arrest deficient 2-like protein 2</fullName>
        <shortName>MAD2-like protein 2</shortName>
        <shortName>xMAD2L2</shortName>
    </alternativeName>
</protein>
<evidence type="ECO:0000250" key="1"/>
<evidence type="ECO:0000255" key="2">
    <source>
        <dbReference type="PROSITE-ProRule" id="PRU00109"/>
    </source>
</evidence>
<evidence type="ECO:0000269" key="3">
    <source>
    </source>
</evidence>
<name>MD2L2_XENLA</name>